<comment type="function">
    <text evidence="1">Responsible for synthesis of pseudouridine from uracil-54 and uracil-55 in the psi GC loop of transfer RNAs.</text>
</comment>
<comment type="catalytic activity">
    <reaction evidence="1">
        <text>uridine(54) in tRNA = pseudouridine(54) in tRNA</text>
        <dbReference type="Rhea" id="RHEA:57876"/>
        <dbReference type="Rhea" id="RHEA-COMP:10193"/>
        <dbReference type="Rhea" id="RHEA-COMP:14141"/>
        <dbReference type="ChEBI" id="CHEBI:65314"/>
        <dbReference type="ChEBI" id="CHEBI:65315"/>
    </reaction>
</comment>
<comment type="catalytic activity">
    <reaction evidence="1">
        <text>uridine(55) in tRNA = pseudouridine(55) in tRNA</text>
        <dbReference type="Rhea" id="RHEA:42532"/>
        <dbReference type="Rhea" id="RHEA-COMP:10101"/>
        <dbReference type="Rhea" id="RHEA-COMP:10102"/>
        <dbReference type="ChEBI" id="CHEBI:65314"/>
        <dbReference type="ChEBI" id="CHEBI:65315"/>
        <dbReference type="EC" id="5.4.99.25"/>
    </reaction>
</comment>
<comment type="similarity">
    <text evidence="1">Belongs to the pseudouridine synthase Pus10 family.</text>
</comment>
<proteinExistence type="inferred from homology"/>
<dbReference type="EC" id="5.4.99.25" evidence="1"/>
<dbReference type="EMBL" id="CP000102">
    <property type="protein sequence ID" value="ABC57908.1"/>
    <property type="molecule type" value="Genomic_DNA"/>
</dbReference>
<dbReference type="RefSeq" id="WP_011407107.1">
    <property type="nucleotide sequence ID" value="NC_007681.1"/>
</dbReference>
<dbReference type="SMR" id="Q2NE45"/>
<dbReference type="STRING" id="339860.Msp_1541"/>
<dbReference type="KEGG" id="mst:Msp_1541"/>
<dbReference type="eggNOG" id="arCOG01015">
    <property type="taxonomic scope" value="Archaea"/>
</dbReference>
<dbReference type="HOGENOM" id="CLU_028780_2_0_2"/>
<dbReference type="OrthoDB" id="10348at2157"/>
<dbReference type="Proteomes" id="UP000001931">
    <property type="component" value="Chromosome"/>
</dbReference>
<dbReference type="GO" id="GO:0000049">
    <property type="term" value="F:tRNA binding"/>
    <property type="evidence" value="ECO:0007669"/>
    <property type="project" value="InterPro"/>
</dbReference>
<dbReference type="GO" id="GO:0160148">
    <property type="term" value="F:tRNA pseudouridine(55) synthase activity"/>
    <property type="evidence" value="ECO:0007669"/>
    <property type="project" value="UniProtKB-EC"/>
</dbReference>
<dbReference type="GO" id="GO:0031119">
    <property type="term" value="P:tRNA pseudouridine synthesis"/>
    <property type="evidence" value="ECO:0007669"/>
    <property type="project" value="UniProtKB-UniRule"/>
</dbReference>
<dbReference type="FunFam" id="3.30.70.2510:FF:000001">
    <property type="entry name" value="tRNA pseudouridine synthase Pus10"/>
    <property type="match status" value="1"/>
</dbReference>
<dbReference type="Gene3D" id="3.30.70.2510">
    <property type="match status" value="1"/>
</dbReference>
<dbReference type="Gene3D" id="3.30.70.3190">
    <property type="match status" value="1"/>
</dbReference>
<dbReference type="HAMAP" id="MF_01893">
    <property type="entry name" value="Pus10_arch"/>
    <property type="match status" value="1"/>
</dbReference>
<dbReference type="InterPro" id="IPR020103">
    <property type="entry name" value="PsdUridine_synth_cat_dom_sf"/>
</dbReference>
<dbReference type="InterPro" id="IPR005912">
    <property type="entry name" value="Pus10"/>
</dbReference>
<dbReference type="InterPro" id="IPR039894">
    <property type="entry name" value="Pus10-like"/>
</dbReference>
<dbReference type="InterPro" id="IPR048741">
    <property type="entry name" value="Pus10-like_C"/>
</dbReference>
<dbReference type="InterPro" id="IPR055174">
    <property type="entry name" value="Pus10_THUMP_arc"/>
</dbReference>
<dbReference type="NCBIfam" id="TIGR01213">
    <property type="entry name" value="pseudo_Pus10arc"/>
    <property type="match status" value="1"/>
</dbReference>
<dbReference type="PANTHER" id="PTHR21568">
    <property type="entry name" value="TRNA PSEUDOURIDINE SYNTHASE PUS10"/>
    <property type="match status" value="1"/>
</dbReference>
<dbReference type="PANTHER" id="PTHR21568:SF0">
    <property type="entry name" value="TRNA PSEUDOURIDINE SYNTHASE PUS10"/>
    <property type="match status" value="1"/>
</dbReference>
<dbReference type="Pfam" id="PF21238">
    <property type="entry name" value="Pus10_C"/>
    <property type="match status" value="1"/>
</dbReference>
<dbReference type="Pfam" id="PF22023">
    <property type="entry name" value="Pus10_THUMP_arc"/>
    <property type="match status" value="1"/>
</dbReference>
<dbReference type="SUPFAM" id="SSF55120">
    <property type="entry name" value="Pseudouridine synthase"/>
    <property type="match status" value="1"/>
</dbReference>
<gene>
    <name evidence="1" type="primary">pus10</name>
    <name type="ordered locus">Msp_1541</name>
</gene>
<accession>Q2NE45</accession>
<organism>
    <name type="scientific">Methanosphaera stadtmanae (strain ATCC 43021 / DSM 3091 / JCM 11832 / MCB-3)</name>
    <dbReference type="NCBI Taxonomy" id="339860"/>
    <lineage>
        <taxon>Archaea</taxon>
        <taxon>Methanobacteriati</taxon>
        <taxon>Methanobacteriota</taxon>
        <taxon>Methanomada group</taxon>
        <taxon>Methanobacteria</taxon>
        <taxon>Methanobacteriales</taxon>
        <taxon>Methanobacteriaceae</taxon>
        <taxon>Methanosphaera</taxon>
    </lineage>
</organism>
<keyword id="KW-0413">Isomerase</keyword>
<keyword id="KW-1185">Reference proteome</keyword>
<keyword id="KW-0694">RNA-binding</keyword>
<keyword id="KW-0819">tRNA processing</keyword>
<protein>
    <recommendedName>
        <fullName evidence="1">tRNA pseudouridine synthase Pus10</fullName>
        <ecNumber evidence="1">5.4.99.25</ecNumber>
    </recommendedName>
    <alternativeName>
        <fullName evidence="1">tRNA pseudouridine 54/55 synthase</fullName>
        <shortName evidence="1">Psi54/55 synthase</shortName>
    </alternativeName>
</protein>
<feature type="chain" id="PRO_0000407391" description="tRNA pseudouridine synthase Pus10">
    <location>
        <begin position="1"/>
        <end position="407"/>
    </location>
</feature>
<feature type="active site" description="Nucleophile" evidence="1">
    <location>
        <position position="232"/>
    </location>
</feature>
<feature type="binding site" evidence="1">
    <location>
        <position position="300"/>
    </location>
    <ligand>
        <name>substrate</name>
    </ligand>
</feature>
<feature type="binding site" evidence="1">
    <location>
        <position position="369"/>
    </location>
    <ligand>
        <name>substrate</name>
    </ligand>
</feature>
<evidence type="ECO:0000255" key="1">
    <source>
        <dbReference type="HAMAP-Rule" id="MF_01893"/>
    </source>
</evidence>
<reference key="1">
    <citation type="journal article" date="2006" name="J. Bacteriol.">
        <title>The genome sequence of Methanosphaera stadtmanae reveals why this human intestinal archaeon is restricted to methanol and H2 for methane formation and ATP synthesis.</title>
        <authorList>
            <person name="Fricke W.F."/>
            <person name="Seedorf H."/>
            <person name="Henne A."/>
            <person name="Kruer M."/>
            <person name="Liesegang H."/>
            <person name="Hedderich R."/>
            <person name="Gottschalk G."/>
            <person name="Thauer R.K."/>
        </authorList>
    </citation>
    <scope>NUCLEOTIDE SEQUENCE [LARGE SCALE GENOMIC DNA]</scope>
    <source>
        <strain>ATCC 43021 / DSM 3091 / JCM 11832 / MCB-3</strain>
    </source>
</reference>
<sequence>MTEKEYNTRQTQNYALCPKCLSRIYRNPKDRDNSIIPLINNTQKCSICNNLLLNEDKIFKLILKKIKMLKIEFDTFLIATQINNQTITKNQKEIYKITNYHGNNDIKHQIRRDISRLIEEKLGKTYDYKNPEVVIMVKIRKKPYKHNPYPEISNVNIFIDSNPIFIEGKYRKLVRGIPQTKWPCTHCKGKGCEACDYTGQQYKDTVEDLISREILPMTNGNTTKFHGSGREDIDVRMLGEGRPFVIEVKHPFKRKIDLKFLRVLVNSHSDGKIEINDLKYVTKERKASIKNSSVESYKIYSAIAEFENGVTSKDIYNIEKLKTIDQRTPIRVEHRRADLIRTREIKNIEVERINSKKLHLIIKCQGGLYIKELISGDNNRTKPSVSSITNNQAECTQLDVLKVHIPE</sequence>
<name>PUS10_METST</name>